<organism>
    <name type="scientific">Oryza sativa subsp. japonica</name>
    <name type="common">Rice</name>
    <dbReference type="NCBI Taxonomy" id="39947"/>
    <lineage>
        <taxon>Eukaryota</taxon>
        <taxon>Viridiplantae</taxon>
        <taxon>Streptophyta</taxon>
        <taxon>Embryophyta</taxon>
        <taxon>Tracheophyta</taxon>
        <taxon>Spermatophyta</taxon>
        <taxon>Magnoliopsida</taxon>
        <taxon>Liliopsida</taxon>
        <taxon>Poales</taxon>
        <taxon>Poaceae</taxon>
        <taxon>BOP clade</taxon>
        <taxon>Oryzoideae</taxon>
        <taxon>Oryzeae</taxon>
        <taxon>Oryzinae</taxon>
        <taxon>Oryza</taxon>
        <taxon>Oryza sativa</taxon>
    </lineage>
</organism>
<accession>Q337C0</accession>
<accession>A3C6F6</accession>
<accession>B7ETR9</accession>
<accession>Q9FW77</accession>
<evidence type="ECO:0000255" key="1"/>
<evidence type="ECO:0000256" key="2">
    <source>
        <dbReference type="SAM" id="MobiDB-lite"/>
    </source>
</evidence>
<evidence type="ECO:0000305" key="3"/>
<sequence>MSRAHGSPRSFFPVGNPFRVMFPGGAHLSRKLQELLASYEDALALSLRKLKPEAASDVLTLSWMRLAVDCLSELHTNIANLITDLELPVSDWDDKWVDIYLNSSVKLLDICIALSSELSRLDQGQLLLQYALHVLGSESGVPSQEQLKRAEPSLREWMELVGVRCARLVSCSATLQELAGNLSLMKVKNSAKGKVLMRALYGIESVTVFVCSIFVAVLSGSPKPLVELHVPEKFGWSQAFNDLHTAVSEELTRQLSGGSVAAVKELEEVEACARRLHVLASTSQLEEEAANLANAVSHTEEEVMSDSIAQEGDHHCGLKLADDTTREGGIVISESIAEGGTQEAEMKKDISYEKEVAMVERISYKEHQDSNVKQANGSSDESALVVPERTSVQESKEELLNCISSMSKSAEGLRHGLDSLSKRVGDFFQIVLTGRDALLCNLRISDAASKVAEVSS</sequence>
<reference key="1">
    <citation type="journal article" date="2003" name="Science">
        <title>In-depth view of structure, activity, and evolution of rice chromosome 10.</title>
        <authorList>
            <person name="Yu Y."/>
            <person name="Rambo T."/>
            <person name="Currie J."/>
            <person name="Saski C."/>
            <person name="Kim H.-R."/>
            <person name="Collura K."/>
            <person name="Thompson S."/>
            <person name="Simmons J."/>
            <person name="Yang T.-J."/>
            <person name="Nah G."/>
            <person name="Patel A.J."/>
            <person name="Thurmond S."/>
            <person name="Henry D."/>
            <person name="Oates R."/>
            <person name="Palmer M."/>
            <person name="Pries G."/>
            <person name="Gibson J."/>
            <person name="Anderson H."/>
            <person name="Paradkar M."/>
            <person name="Crane L."/>
            <person name="Dale J."/>
            <person name="Carver M.B."/>
            <person name="Wood T."/>
            <person name="Frisch D."/>
            <person name="Engler F."/>
            <person name="Soderlund C."/>
            <person name="Palmer L.E."/>
            <person name="Teytelman L."/>
            <person name="Nascimento L."/>
            <person name="De la Bastide M."/>
            <person name="Spiegel L."/>
            <person name="Ware D."/>
            <person name="O'Shaughnessy A."/>
            <person name="Dike S."/>
            <person name="Dedhia N."/>
            <person name="Preston R."/>
            <person name="Huang E."/>
            <person name="Ferraro K."/>
            <person name="Kuit K."/>
            <person name="Miller B."/>
            <person name="Zutavern T."/>
            <person name="Katzenberger F."/>
            <person name="Muller S."/>
            <person name="Balija V."/>
            <person name="Martienssen R.A."/>
            <person name="Stein L."/>
            <person name="Minx P."/>
            <person name="Johnson D."/>
            <person name="Cordum H."/>
            <person name="Mardis E."/>
            <person name="Cheng Z."/>
            <person name="Jiang J."/>
            <person name="Wilson R."/>
            <person name="McCombie W.R."/>
            <person name="Wing R.A."/>
            <person name="Yuan Q."/>
            <person name="Ouyang S."/>
            <person name="Liu J."/>
            <person name="Jones K.M."/>
            <person name="Gansberger K."/>
            <person name="Moffat K."/>
            <person name="Hill J."/>
            <person name="Tsitrin T."/>
            <person name="Overton L."/>
            <person name="Bera J."/>
            <person name="Kim M."/>
            <person name="Jin S."/>
            <person name="Tallon L."/>
            <person name="Ciecko A."/>
            <person name="Pai G."/>
            <person name="Van Aken S."/>
            <person name="Utterback T."/>
            <person name="Reidmuller S."/>
            <person name="Bormann J."/>
            <person name="Feldblyum T."/>
            <person name="Hsiao J."/>
            <person name="Zismann V."/>
            <person name="Blunt S."/>
            <person name="de Vazeille A.R."/>
            <person name="Shaffer T."/>
            <person name="Koo H."/>
            <person name="Suh B."/>
            <person name="Yang Q."/>
            <person name="Haas B."/>
            <person name="Peterson J."/>
            <person name="Pertea M."/>
            <person name="Volfovsky N."/>
            <person name="Wortman J."/>
            <person name="White O."/>
            <person name="Salzberg S.L."/>
            <person name="Fraser C.M."/>
            <person name="Buell C.R."/>
            <person name="Messing J."/>
            <person name="Song R."/>
            <person name="Fuks G."/>
            <person name="Llaca V."/>
            <person name="Kovchak S."/>
            <person name="Young S."/>
            <person name="Bowers J.E."/>
            <person name="Paterson A.H."/>
            <person name="Johns M.A."/>
            <person name="Mao L."/>
            <person name="Pan H."/>
            <person name="Dean R.A."/>
        </authorList>
    </citation>
    <scope>NUCLEOTIDE SEQUENCE [LARGE SCALE GENOMIC DNA]</scope>
    <source>
        <strain>cv. Nipponbare</strain>
    </source>
</reference>
<reference key="2">
    <citation type="journal article" date="2005" name="Nature">
        <title>The map-based sequence of the rice genome.</title>
        <authorList>
            <consortium name="International rice genome sequencing project (IRGSP)"/>
        </authorList>
    </citation>
    <scope>NUCLEOTIDE SEQUENCE [LARGE SCALE GENOMIC DNA]</scope>
    <source>
        <strain>cv. Nipponbare</strain>
    </source>
</reference>
<reference key="3">
    <citation type="journal article" date="2008" name="Nucleic Acids Res.">
        <title>The rice annotation project database (RAP-DB): 2008 update.</title>
        <authorList>
            <consortium name="The rice annotation project (RAP)"/>
        </authorList>
    </citation>
    <scope>GENOME REANNOTATION</scope>
    <source>
        <strain>cv. Nipponbare</strain>
    </source>
</reference>
<reference key="4">
    <citation type="journal article" date="2013" name="Rice">
        <title>Improvement of the Oryza sativa Nipponbare reference genome using next generation sequence and optical map data.</title>
        <authorList>
            <person name="Kawahara Y."/>
            <person name="de la Bastide M."/>
            <person name="Hamilton J.P."/>
            <person name="Kanamori H."/>
            <person name="McCombie W.R."/>
            <person name="Ouyang S."/>
            <person name="Schwartz D.C."/>
            <person name="Tanaka T."/>
            <person name="Wu J."/>
            <person name="Zhou S."/>
            <person name="Childs K.L."/>
            <person name="Davidson R.M."/>
            <person name="Lin H."/>
            <person name="Quesada-Ocampo L."/>
            <person name="Vaillancourt B."/>
            <person name="Sakai H."/>
            <person name="Lee S.S."/>
            <person name="Kim J."/>
            <person name="Numa H."/>
            <person name="Itoh T."/>
            <person name="Buell C.R."/>
            <person name="Matsumoto T."/>
        </authorList>
    </citation>
    <scope>GENOME REANNOTATION</scope>
    <source>
        <strain>cv. Nipponbare</strain>
    </source>
</reference>
<reference key="5">
    <citation type="journal article" date="2005" name="PLoS Biol.">
        <title>The genomes of Oryza sativa: a history of duplications.</title>
        <authorList>
            <person name="Yu J."/>
            <person name="Wang J."/>
            <person name="Lin W."/>
            <person name="Li S."/>
            <person name="Li H."/>
            <person name="Zhou J."/>
            <person name="Ni P."/>
            <person name="Dong W."/>
            <person name="Hu S."/>
            <person name="Zeng C."/>
            <person name="Zhang J."/>
            <person name="Zhang Y."/>
            <person name="Li R."/>
            <person name="Xu Z."/>
            <person name="Li S."/>
            <person name="Li X."/>
            <person name="Zheng H."/>
            <person name="Cong L."/>
            <person name="Lin L."/>
            <person name="Yin J."/>
            <person name="Geng J."/>
            <person name="Li G."/>
            <person name="Shi J."/>
            <person name="Liu J."/>
            <person name="Lv H."/>
            <person name="Li J."/>
            <person name="Wang J."/>
            <person name="Deng Y."/>
            <person name="Ran L."/>
            <person name="Shi X."/>
            <person name="Wang X."/>
            <person name="Wu Q."/>
            <person name="Li C."/>
            <person name="Ren X."/>
            <person name="Wang J."/>
            <person name="Wang X."/>
            <person name="Li D."/>
            <person name="Liu D."/>
            <person name="Zhang X."/>
            <person name="Ji Z."/>
            <person name="Zhao W."/>
            <person name="Sun Y."/>
            <person name="Zhang Z."/>
            <person name="Bao J."/>
            <person name="Han Y."/>
            <person name="Dong L."/>
            <person name="Ji J."/>
            <person name="Chen P."/>
            <person name="Wu S."/>
            <person name="Liu J."/>
            <person name="Xiao Y."/>
            <person name="Bu D."/>
            <person name="Tan J."/>
            <person name="Yang L."/>
            <person name="Ye C."/>
            <person name="Zhang J."/>
            <person name="Xu J."/>
            <person name="Zhou Y."/>
            <person name="Yu Y."/>
            <person name="Zhang B."/>
            <person name="Zhuang S."/>
            <person name="Wei H."/>
            <person name="Liu B."/>
            <person name="Lei M."/>
            <person name="Yu H."/>
            <person name="Li Y."/>
            <person name="Xu H."/>
            <person name="Wei S."/>
            <person name="He X."/>
            <person name="Fang L."/>
            <person name="Zhang Z."/>
            <person name="Zhang Y."/>
            <person name="Huang X."/>
            <person name="Su Z."/>
            <person name="Tong W."/>
            <person name="Li J."/>
            <person name="Tong Z."/>
            <person name="Li S."/>
            <person name="Ye J."/>
            <person name="Wang L."/>
            <person name="Fang L."/>
            <person name="Lei T."/>
            <person name="Chen C.-S."/>
            <person name="Chen H.-C."/>
            <person name="Xu Z."/>
            <person name="Li H."/>
            <person name="Huang H."/>
            <person name="Zhang F."/>
            <person name="Xu H."/>
            <person name="Li N."/>
            <person name="Zhao C."/>
            <person name="Li S."/>
            <person name="Dong L."/>
            <person name="Huang Y."/>
            <person name="Li L."/>
            <person name="Xi Y."/>
            <person name="Qi Q."/>
            <person name="Li W."/>
            <person name="Zhang B."/>
            <person name="Hu W."/>
            <person name="Zhang Y."/>
            <person name="Tian X."/>
            <person name="Jiao Y."/>
            <person name="Liang X."/>
            <person name="Jin J."/>
            <person name="Gao L."/>
            <person name="Zheng W."/>
            <person name="Hao B."/>
            <person name="Liu S.-M."/>
            <person name="Wang W."/>
            <person name="Yuan L."/>
            <person name="Cao M."/>
            <person name="McDermott J."/>
            <person name="Samudrala R."/>
            <person name="Wang J."/>
            <person name="Wong G.K.-S."/>
            <person name="Yang H."/>
        </authorList>
    </citation>
    <scope>NUCLEOTIDE SEQUENCE [LARGE SCALE GENOMIC DNA]</scope>
    <source>
        <strain>cv. Nipponbare</strain>
    </source>
</reference>
<reference key="6">
    <citation type="journal article" date="2003" name="Science">
        <title>Collection, mapping, and annotation of over 28,000 cDNA clones from japonica rice.</title>
        <authorList>
            <consortium name="The rice full-length cDNA consortium"/>
        </authorList>
    </citation>
    <scope>NUCLEOTIDE SEQUENCE [LARGE SCALE MRNA]</scope>
    <source>
        <strain>cv. Nipponbare</strain>
    </source>
</reference>
<protein>
    <recommendedName>
        <fullName>UPF0496 protein 4</fullName>
    </recommendedName>
</protein>
<name>U496D_ORYSJ</name>
<feature type="chain" id="PRO_0000306911" description="UPF0496 protein 4">
    <location>
        <begin position="1"/>
        <end position="456"/>
    </location>
</feature>
<feature type="transmembrane region" description="Helical" evidence="1">
    <location>
        <begin position="195"/>
        <end position="217"/>
    </location>
</feature>
<feature type="region of interest" description="Disordered" evidence="2">
    <location>
        <begin position="368"/>
        <end position="390"/>
    </location>
</feature>
<feature type="compositionally biased region" description="Polar residues" evidence="2">
    <location>
        <begin position="371"/>
        <end position="381"/>
    </location>
</feature>
<gene>
    <name type="ordered locus">Os10g0513300</name>
    <name type="ordered locus">LOC_Os10g36950</name>
    <name type="ORF">OsJ_030878</name>
    <name type="ORF">OSJNBa0026L12.27</name>
</gene>
<dbReference type="EMBL" id="AC068924">
    <property type="protein sequence ID" value="AAG13509.1"/>
    <property type="status" value="ALT_SEQ"/>
    <property type="molecule type" value="Genomic_DNA"/>
</dbReference>
<dbReference type="EMBL" id="DP000086">
    <property type="protein sequence ID" value="ABB47882.1"/>
    <property type="molecule type" value="Genomic_DNA"/>
</dbReference>
<dbReference type="EMBL" id="AP008216">
    <property type="protein sequence ID" value="BAF26963.1"/>
    <property type="status" value="ALT_SEQ"/>
    <property type="molecule type" value="Genomic_DNA"/>
</dbReference>
<dbReference type="EMBL" id="AP014966">
    <property type="protein sequence ID" value="BAT11638.1"/>
    <property type="molecule type" value="Genomic_DNA"/>
</dbReference>
<dbReference type="EMBL" id="CM000147">
    <property type="protein sequence ID" value="EAZ16669.1"/>
    <property type="status" value="ALT_SEQ"/>
    <property type="molecule type" value="Genomic_DNA"/>
</dbReference>
<dbReference type="EMBL" id="AK102890">
    <property type="protein sequence ID" value="BAG95766.1"/>
    <property type="molecule type" value="mRNA"/>
</dbReference>
<dbReference type="RefSeq" id="XP_015614868.1">
    <property type="nucleotide sequence ID" value="XM_015759382.1"/>
</dbReference>
<dbReference type="SMR" id="Q337C0"/>
<dbReference type="FunCoup" id="Q337C0">
    <property type="interactions" value="2231"/>
</dbReference>
<dbReference type="STRING" id="39947.Q337C0"/>
<dbReference type="PaxDb" id="39947-Q337C0"/>
<dbReference type="EnsemblPlants" id="Os10t0513300-01">
    <property type="protein sequence ID" value="Os10t0513300-01"/>
    <property type="gene ID" value="Os10g0513300"/>
</dbReference>
<dbReference type="Gramene" id="Os10t0513300-01">
    <property type="protein sequence ID" value="Os10t0513300-01"/>
    <property type="gene ID" value="Os10g0513300"/>
</dbReference>
<dbReference type="KEGG" id="dosa:Os10g0513300"/>
<dbReference type="eggNOG" id="ENOG502QPVM">
    <property type="taxonomic scope" value="Eukaryota"/>
</dbReference>
<dbReference type="HOGENOM" id="CLU_034894_0_0_1"/>
<dbReference type="InParanoid" id="Q337C0"/>
<dbReference type="OMA" id="GWRQHIG"/>
<dbReference type="OrthoDB" id="694709at2759"/>
<dbReference type="Proteomes" id="UP000000763">
    <property type="component" value="Chromosome 10"/>
</dbReference>
<dbReference type="Proteomes" id="UP000007752">
    <property type="component" value="Chromosome 10"/>
</dbReference>
<dbReference type="Proteomes" id="UP000059680">
    <property type="component" value="Chromosome 10"/>
</dbReference>
<dbReference type="ExpressionAtlas" id="Q337C0">
    <property type="expression patterns" value="baseline and differential"/>
</dbReference>
<dbReference type="GO" id="GO:0016020">
    <property type="term" value="C:membrane"/>
    <property type="evidence" value="ECO:0007669"/>
    <property type="project" value="UniProtKB-SubCell"/>
</dbReference>
<dbReference type="InterPro" id="IPR008511">
    <property type="entry name" value="ROH1-like"/>
</dbReference>
<dbReference type="PANTHER" id="PTHR31509">
    <property type="entry name" value="BPS1-LIKE PROTEIN"/>
    <property type="match status" value="1"/>
</dbReference>
<dbReference type="Pfam" id="PF05633">
    <property type="entry name" value="ROH1-like"/>
    <property type="match status" value="1"/>
</dbReference>
<proteinExistence type="evidence at transcript level"/>
<comment type="subcellular location">
    <subcellularLocation>
        <location evidence="3">Membrane</location>
        <topology evidence="3">Single-pass membrane protein</topology>
    </subcellularLocation>
</comment>
<comment type="similarity">
    <text evidence="3">Belongs to the ROH1 family.</text>
</comment>
<comment type="sequence caution" evidence="3">
    <conflict type="erroneous gene model prediction">
        <sequence resource="EMBL-CDS" id="AAG13509"/>
    </conflict>
</comment>
<comment type="sequence caution" evidence="3">
    <conflict type="erroneous gene model prediction">
        <sequence resource="EMBL-CDS" id="BAF26963"/>
    </conflict>
</comment>
<comment type="sequence caution" evidence="3">
    <conflict type="erroneous gene model prediction">
        <sequence resource="EMBL-CDS" id="EAZ16669"/>
    </conflict>
</comment>
<keyword id="KW-0472">Membrane</keyword>
<keyword id="KW-1185">Reference proteome</keyword>
<keyword id="KW-0812">Transmembrane</keyword>
<keyword id="KW-1133">Transmembrane helix</keyword>